<gene>
    <name evidence="1" type="primary">fis</name>
    <name type="ordered locus">YPO3654</name>
    <name type="ordered locus">y0214</name>
    <name type="ordered locus">YP_3893</name>
</gene>
<accession>Q8ZAX8</accession>
<accession>Q0WAZ9</accession>
<sequence length="98" mass="11197">MFEQRVNSDVLTVATVNSQDQVTQKPLRDSVKQALKNYFAQLNGQDVSDLYELVLAEVEQPLLDMVMQYTRGNQTRAALMMGINRGTLRKKLKKYGMN</sequence>
<dbReference type="EMBL" id="AL590842">
    <property type="protein sequence ID" value="CAL22242.1"/>
    <property type="molecule type" value="Genomic_DNA"/>
</dbReference>
<dbReference type="EMBL" id="AE009952">
    <property type="protein sequence ID" value="AAM83808.1"/>
    <property type="molecule type" value="Genomic_DNA"/>
</dbReference>
<dbReference type="EMBL" id="AE017042">
    <property type="protein sequence ID" value="AAS64038.1"/>
    <property type="molecule type" value="Genomic_DNA"/>
</dbReference>
<dbReference type="PIR" id="AG0444">
    <property type="entry name" value="AG0444"/>
</dbReference>
<dbReference type="RefSeq" id="WP_002210061.1">
    <property type="nucleotide sequence ID" value="NZ_WUCM01000059.1"/>
</dbReference>
<dbReference type="RefSeq" id="YP_002348539.1">
    <property type="nucleotide sequence ID" value="NC_003143.1"/>
</dbReference>
<dbReference type="SMR" id="Q8ZAX8"/>
<dbReference type="STRING" id="214092.YPO3654"/>
<dbReference type="PaxDb" id="214092-YPO3654"/>
<dbReference type="DNASU" id="1145161"/>
<dbReference type="EnsemblBacteria" id="AAS64038">
    <property type="protein sequence ID" value="AAS64038"/>
    <property type="gene ID" value="YP_3893"/>
</dbReference>
<dbReference type="GeneID" id="97454355"/>
<dbReference type="KEGG" id="ype:YPO3654"/>
<dbReference type="KEGG" id="ypk:y0214"/>
<dbReference type="KEGG" id="ypm:YP_3893"/>
<dbReference type="PATRIC" id="fig|214092.21.peg.4155"/>
<dbReference type="eggNOG" id="COG2901">
    <property type="taxonomic scope" value="Bacteria"/>
</dbReference>
<dbReference type="HOGENOM" id="CLU_158040_3_0_6"/>
<dbReference type="OMA" id="LCEVEAP"/>
<dbReference type="OrthoDB" id="9802388at2"/>
<dbReference type="Proteomes" id="UP000000815">
    <property type="component" value="Chromosome"/>
</dbReference>
<dbReference type="Proteomes" id="UP000001019">
    <property type="component" value="Chromosome"/>
</dbReference>
<dbReference type="Proteomes" id="UP000002490">
    <property type="component" value="Chromosome"/>
</dbReference>
<dbReference type="GO" id="GO:0003700">
    <property type="term" value="F:DNA-binding transcription factor activity"/>
    <property type="evidence" value="ECO:0007669"/>
    <property type="project" value="UniProtKB-UniRule"/>
</dbReference>
<dbReference type="GO" id="GO:0043565">
    <property type="term" value="F:sequence-specific DNA binding"/>
    <property type="evidence" value="ECO:0000318"/>
    <property type="project" value="GO_Central"/>
</dbReference>
<dbReference type="FunFam" id="1.10.10.60:FF:000006">
    <property type="entry name" value="DNA-binding protein Fis"/>
    <property type="match status" value="1"/>
</dbReference>
<dbReference type="Gene3D" id="1.10.10.60">
    <property type="entry name" value="Homeodomain-like"/>
    <property type="match status" value="1"/>
</dbReference>
<dbReference type="HAMAP" id="MF_00166">
    <property type="entry name" value="DNA_binding_Fis"/>
    <property type="match status" value="1"/>
</dbReference>
<dbReference type="InterPro" id="IPR005412">
    <property type="entry name" value="Fis_DNA-bd"/>
</dbReference>
<dbReference type="InterPro" id="IPR009057">
    <property type="entry name" value="Homeodomain-like_sf"/>
</dbReference>
<dbReference type="InterPro" id="IPR002197">
    <property type="entry name" value="HTH_Fis"/>
</dbReference>
<dbReference type="InterPro" id="IPR050207">
    <property type="entry name" value="Trans_regulatory_Fis"/>
</dbReference>
<dbReference type="NCBIfam" id="NF001659">
    <property type="entry name" value="PRK00430.1"/>
    <property type="match status" value="1"/>
</dbReference>
<dbReference type="PANTHER" id="PTHR47918">
    <property type="entry name" value="DNA-BINDING PROTEIN FIS"/>
    <property type="match status" value="1"/>
</dbReference>
<dbReference type="PANTHER" id="PTHR47918:SF1">
    <property type="entry name" value="DNA-BINDING PROTEIN FIS"/>
    <property type="match status" value="1"/>
</dbReference>
<dbReference type="Pfam" id="PF02954">
    <property type="entry name" value="HTH_8"/>
    <property type="match status" value="1"/>
</dbReference>
<dbReference type="PIRSF" id="PIRSF002097">
    <property type="entry name" value="DNA-binding_Fis"/>
    <property type="match status" value="1"/>
</dbReference>
<dbReference type="PRINTS" id="PR01591">
    <property type="entry name" value="DNABINDNGFIS"/>
</dbReference>
<dbReference type="PRINTS" id="PR01590">
    <property type="entry name" value="HTHFIS"/>
</dbReference>
<dbReference type="SUPFAM" id="SSF46689">
    <property type="entry name" value="Homeodomain-like"/>
    <property type="match status" value="1"/>
</dbReference>
<proteinExistence type="inferred from homology"/>
<comment type="function">
    <text evidence="1">Activates ribosomal RNA transcription. Plays a direct role in upstream activation of rRNA promoters.</text>
</comment>
<comment type="subunit">
    <text evidence="1">Homodimer.</text>
</comment>
<comment type="similarity">
    <text evidence="1">Belongs to the transcriptional regulatory Fis family.</text>
</comment>
<reference key="1">
    <citation type="journal article" date="2001" name="Nature">
        <title>Genome sequence of Yersinia pestis, the causative agent of plague.</title>
        <authorList>
            <person name="Parkhill J."/>
            <person name="Wren B.W."/>
            <person name="Thomson N.R."/>
            <person name="Titball R.W."/>
            <person name="Holden M.T.G."/>
            <person name="Prentice M.B."/>
            <person name="Sebaihia M."/>
            <person name="James K.D."/>
            <person name="Churcher C.M."/>
            <person name="Mungall K.L."/>
            <person name="Baker S."/>
            <person name="Basham D."/>
            <person name="Bentley S.D."/>
            <person name="Brooks K."/>
            <person name="Cerdeno-Tarraga A.-M."/>
            <person name="Chillingworth T."/>
            <person name="Cronin A."/>
            <person name="Davies R.M."/>
            <person name="Davis P."/>
            <person name="Dougan G."/>
            <person name="Feltwell T."/>
            <person name="Hamlin N."/>
            <person name="Holroyd S."/>
            <person name="Jagels K."/>
            <person name="Karlyshev A.V."/>
            <person name="Leather S."/>
            <person name="Moule S."/>
            <person name="Oyston P.C.F."/>
            <person name="Quail M.A."/>
            <person name="Rutherford K.M."/>
            <person name="Simmonds M."/>
            <person name="Skelton J."/>
            <person name="Stevens K."/>
            <person name="Whitehead S."/>
            <person name="Barrell B.G."/>
        </authorList>
    </citation>
    <scope>NUCLEOTIDE SEQUENCE [LARGE SCALE GENOMIC DNA]</scope>
    <source>
        <strain>CO-92 / Biovar Orientalis</strain>
    </source>
</reference>
<reference key="2">
    <citation type="journal article" date="2002" name="J. Bacteriol.">
        <title>Genome sequence of Yersinia pestis KIM.</title>
        <authorList>
            <person name="Deng W."/>
            <person name="Burland V."/>
            <person name="Plunkett G. III"/>
            <person name="Boutin A."/>
            <person name="Mayhew G.F."/>
            <person name="Liss P."/>
            <person name="Perna N.T."/>
            <person name="Rose D.J."/>
            <person name="Mau B."/>
            <person name="Zhou S."/>
            <person name="Schwartz D.C."/>
            <person name="Fetherston J.D."/>
            <person name="Lindler L.E."/>
            <person name="Brubaker R.R."/>
            <person name="Plano G.V."/>
            <person name="Straley S.C."/>
            <person name="McDonough K.A."/>
            <person name="Nilles M.L."/>
            <person name="Matson J.S."/>
            <person name="Blattner F.R."/>
            <person name="Perry R.D."/>
        </authorList>
    </citation>
    <scope>NUCLEOTIDE SEQUENCE [LARGE SCALE GENOMIC DNA]</scope>
    <source>
        <strain>KIM10+ / Biovar Mediaevalis</strain>
    </source>
</reference>
<reference key="3">
    <citation type="journal article" date="2004" name="DNA Res.">
        <title>Complete genome sequence of Yersinia pestis strain 91001, an isolate avirulent to humans.</title>
        <authorList>
            <person name="Song Y."/>
            <person name="Tong Z."/>
            <person name="Wang J."/>
            <person name="Wang L."/>
            <person name="Guo Z."/>
            <person name="Han Y."/>
            <person name="Zhang J."/>
            <person name="Pei D."/>
            <person name="Zhou D."/>
            <person name="Qin H."/>
            <person name="Pang X."/>
            <person name="Han Y."/>
            <person name="Zhai J."/>
            <person name="Li M."/>
            <person name="Cui B."/>
            <person name="Qi Z."/>
            <person name="Jin L."/>
            <person name="Dai R."/>
            <person name="Chen F."/>
            <person name="Li S."/>
            <person name="Ye C."/>
            <person name="Du Z."/>
            <person name="Lin W."/>
            <person name="Wang J."/>
            <person name="Yu J."/>
            <person name="Yang H."/>
            <person name="Wang J."/>
            <person name="Huang P."/>
            <person name="Yang R."/>
        </authorList>
    </citation>
    <scope>NUCLEOTIDE SEQUENCE [LARGE SCALE GENOMIC DNA]</scope>
    <source>
        <strain>91001 / Biovar Mediaevalis</strain>
    </source>
</reference>
<evidence type="ECO:0000255" key="1">
    <source>
        <dbReference type="HAMAP-Rule" id="MF_00166"/>
    </source>
</evidence>
<name>FIS_YERPE</name>
<protein>
    <recommendedName>
        <fullName evidence="1">DNA-binding protein Fis</fullName>
    </recommendedName>
</protein>
<organism>
    <name type="scientific">Yersinia pestis</name>
    <dbReference type="NCBI Taxonomy" id="632"/>
    <lineage>
        <taxon>Bacteria</taxon>
        <taxon>Pseudomonadati</taxon>
        <taxon>Pseudomonadota</taxon>
        <taxon>Gammaproteobacteria</taxon>
        <taxon>Enterobacterales</taxon>
        <taxon>Yersiniaceae</taxon>
        <taxon>Yersinia</taxon>
    </lineage>
</organism>
<keyword id="KW-0010">Activator</keyword>
<keyword id="KW-0238">DNA-binding</keyword>
<keyword id="KW-1185">Reference proteome</keyword>
<keyword id="KW-0804">Transcription</keyword>
<keyword id="KW-0805">Transcription regulation</keyword>
<feature type="chain" id="PRO_0000203903" description="DNA-binding protein Fis">
    <location>
        <begin position="1"/>
        <end position="98"/>
    </location>
</feature>
<feature type="DNA-binding region" description="H-T-H motif" evidence="1">
    <location>
        <begin position="74"/>
        <end position="93"/>
    </location>
</feature>